<organism>
    <name type="scientific">Colletotrichum kahawae</name>
    <name type="common">Coffee berry disease fungus</name>
    <dbReference type="NCBI Taxonomy" id="34407"/>
    <lineage>
        <taxon>Eukaryota</taxon>
        <taxon>Fungi</taxon>
        <taxon>Dikarya</taxon>
        <taxon>Ascomycota</taxon>
        <taxon>Pezizomycotina</taxon>
        <taxon>Sordariomycetes</taxon>
        <taxon>Hypocreomycetidae</taxon>
        <taxon>Glomerellales</taxon>
        <taxon>Glomerellaceae</taxon>
        <taxon>Colletotrichum</taxon>
        <taxon>Colletotrichum gloeosporioides species complex</taxon>
    </lineage>
</organism>
<dbReference type="EC" id="3.1.1.74" evidence="5"/>
<dbReference type="GO" id="GO:0005576">
    <property type="term" value="C:extracellular region"/>
    <property type="evidence" value="ECO:0000314"/>
    <property type="project" value="UniProtKB"/>
</dbReference>
<dbReference type="GO" id="GO:0050525">
    <property type="term" value="F:cutinase activity"/>
    <property type="evidence" value="ECO:0000314"/>
    <property type="project" value="UniProtKB"/>
</dbReference>
<accession>P86012</accession>
<comment type="function">
    <text evidence="1 2">Catalyzes the hydrolysis of complex carboxylic polyesters found in the cell wall of plants (PubMed:17043825). Degrades cutin, a macromolecule that forms the structure of the plant cuticle (PubMed:17043825). Allows pathogenic fungi to penetrate through the cuticular barrier into the host plant during the initial stage of fungal infection (By similarity).</text>
</comment>
<comment type="catalytic activity">
    <reaction evidence="5">
        <text>cutin + H2O = cutin monomers.</text>
        <dbReference type="EC" id="3.1.1.74"/>
    </reaction>
</comment>
<comment type="activity regulation">
    <text evidence="2">Inhibited by diisopropyl fluorophosphate (DFP).</text>
</comment>
<comment type="subcellular location">
    <subcellularLocation>
        <location evidence="2">Secreted</location>
    </subcellularLocation>
</comment>
<comment type="induction">
    <text evidence="2">By contact with cutin.</text>
</comment>
<comment type="miscellaneous">
    <text evidence="2">On the 2D-gel the determined MW is: 40.5 kDa.</text>
</comment>
<comment type="similarity">
    <text evidence="2">Belongs to the cutinase family.</text>
</comment>
<keyword id="KW-0903">Direct protein sequencing</keyword>
<keyword id="KW-0378">Hydrolase</keyword>
<keyword id="KW-0964">Secreted</keyword>
<keyword id="KW-0719">Serine esterase</keyword>
<keyword id="KW-0843">Virulence</keyword>
<proteinExistence type="evidence at protein level"/>
<feature type="chain" id="PRO_0000352647" description="Cutinase 2">
    <location>
        <begin position="1"/>
        <end position="6" status="greater than"/>
    </location>
</feature>
<feature type="non-terminal residue" evidence="3">
    <location>
        <position position="6"/>
    </location>
</feature>
<reference evidence="4" key="1">
    <citation type="journal article" date="2007" name="Appl. Microbiol. Biotechnol.">
        <title>Purification and identification of cutinases from Colletotrichum kahawae and Colletotrichum gloeosporioides.</title>
        <authorList>
            <person name="Chen Z."/>
            <person name="Franco C.F."/>
            <person name="Baptista R.P."/>
            <person name="Cabral J.M.S."/>
            <person name="Coelho A.V."/>
            <person name="Rodrigues C.J. Jr."/>
            <person name="Melo E.P."/>
        </authorList>
    </citation>
    <scope>PROTEIN SEQUENCE</scope>
    <scope>FUNCTION</scope>
    <scope>CATALYTIC ACTIVITY</scope>
    <scope>ACTIVITY REGULATION</scope>
    <scope>SUBCELLULAR LOCATION</scope>
    <scope>INDUCTION</scope>
    <source>
        <strain evidence="2">Z1</strain>
    </source>
</reference>
<protein>
    <recommendedName>
        <fullName>Cutinase 2</fullName>
        <ecNumber evidence="5">3.1.1.74</ecNumber>
    </recommendedName>
    <alternativeName>
        <fullName>Cutin hydrolase 2</fullName>
    </alternativeName>
</protein>
<evidence type="ECO:0000250" key="1">
    <source>
        <dbReference type="UniProtKB" id="P00590"/>
    </source>
</evidence>
<evidence type="ECO:0000269" key="2">
    <source>
    </source>
</evidence>
<evidence type="ECO:0000303" key="3">
    <source>
    </source>
</evidence>
<evidence type="ECO:0000305" key="4"/>
<evidence type="ECO:0000305" key="5">
    <source>
    </source>
</evidence>
<sequence>DINGGA</sequence>
<name>CUTI2_COLKA</name>